<gene>
    <name evidence="1" type="primary">rpsJ</name>
    <name type="ordered locus">Ssed_4318</name>
</gene>
<sequence length="103" mass="11771">MQNQRIRIRLKGFDHRLIDQSTAEIVETAKRTGAQVRGPIPLPTRKERYTILTSPHVNKDARDQYELRTHKRLVDIVEPTEKTVDALMRLDLAAGVDVQISLG</sequence>
<dbReference type="EMBL" id="CP000821">
    <property type="protein sequence ID" value="ABV38922.1"/>
    <property type="molecule type" value="Genomic_DNA"/>
</dbReference>
<dbReference type="RefSeq" id="WP_005503530.1">
    <property type="nucleotide sequence ID" value="NC_009831.1"/>
</dbReference>
<dbReference type="SMR" id="A8G1E9"/>
<dbReference type="STRING" id="425104.Ssed_4318"/>
<dbReference type="KEGG" id="sse:Ssed_4318"/>
<dbReference type="eggNOG" id="COG0051">
    <property type="taxonomic scope" value="Bacteria"/>
</dbReference>
<dbReference type="HOGENOM" id="CLU_122625_1_3_6"/>
<dbReference type="OrthoDB" id="9804464at2"/>
<dbReference type="Proteomes" id="UP000002015">
    <property type="component" value="Chromosome"/>
</dbReference>
<dbReference type="GO" id="GO:1990904">
    <property type="term" value="C:ribonucleoprotein complex"/>
    <property type="evidence" value="ECO:0007669"/>
    <property type="project" value="UniProtKB-KW"/>
</dbReference>
<dbReference type="GO" id="GO:0005840">
    <property type="term" value="C:ribosome"/>
    <property type="evidence" value="ECO:0007669"/>
    <property type="project" value="UniProtKB-KW"/>
</dbReference>
<dbReference type="GO" id="GO:0003735">
    <property type="term" value="F:structural constituent of ribosome"/>
    <property type="evidence" value="ECO:0007669"/>
    <property type="project" value="InterPro"/>
</dbReference>
<dbReference type="GO" id="GO:0000049">
    <property type="term" value="F:tRNA binding"/>
    <property type="evidence" value="ECO:0007669"/>
    <property type="project" value="UniProtKB-UniRule"/>
</dbReference>
<dbReference type="GO" id="GO:0006412">
    <property type="term" value="P:translation"/>
    <property type="evidence" value="ECO:0007669"/>
    <property type="project" value="UniProtKB-UniRule"/>
</dbReference>
<dbReference type="FunFam" id="3.30.70.600:FF:000001">
    <property type="entry name" value="30S ribosomal protein S10"/>
    <property type="match status" value="1"/>
</dbReference>
<dbReference type="Gene3D" id="3.30.70.600">
    <property type="entry name" value="Ribosomal protein S10 domain"/>
    <property type="match status" value="1"/>
</dbReference>
<dbReference type="HAMAP" id="MF_00508">
    <property type="entry name" value="Ribosomal_uS10"/>
    <property type="match status" value="1"/>
</dbReference>
<dbReference type="InterPro" id="IPR001848">
    <property type="entry name" value="Ribosomal_uS10"/>
</dbReference>
<dbReference type="InterPro" id="IPR018268">
    <property type="entry name" value="Ribosomal_uS10_CS"/>
</dbReference>
<dbReference type="InterPro" id="IPR027486">
    <property type="entry name" value="Ribosomal_uS10_dom"/>
</dbReference>
<dbReference type="InterPro" id="IPR036838">
    <property type="entry name" value="Ribosomal_uS10_dom_sf"/>
</dbReference>
<dbReference type="NCBIfam" id="NF001861">
    <property type="entry name" value="PRK00596.1"/>
    <property type="match status" value="1"/>
</dbReference>
<dbReference type="NCBIfam" id="TIGR01049">
    <property type="entry name" value="rpsJ_bact"/>
    <property type="match status" value="1"/>
</dbReference>
<dbReference type="PANTHER" id="PTHR11700">
    <property type="entry name" value="30S RIBOSOMAL PROTEIN S10 FAMILY MEMBER"/>
    <property type="match status" value="1"/>
</dbReference>
<dbReference type="Pfam" id="PF00338">
    <property type="entry name" value="Ribosomal_S10"/>
    <property type="match status" value="1"/>
</dbReference>
<dbReference type="PRINTS" id="PR00971">
    <property type="entry name" value="RIBOSOMALS10"/>
</dbReference>
<dbReference type="SMART" id="SM01403">
    <property type="entry name" value="Ribosomal_S10"/>
    <property type="match status" value="1"/>
</dbReference>
<dbReference type="SUPFAM" id="SSF54999">
    <property type="entry name" value="Ribosomal protein S10"/>
    <property type="match status" value="1"/>
</dbReference>
<dbReference type="PROSITE" id="PS00361">
    <property type="entry name" value="RIBOSOMAL_S10"/>
    <property type="match status" value="1"/>
</dbReference>
<name>RS10_SHESH</name>
<protein>
    <recommendedName>
        <fullName evidence="1">Small ribosomal subunit protein uS10</fullName>
    </recommendedName>
    <alternativeName>
        <fullName evidence="2">30S ribosomal protein S10</fullName>
    </alternativeName>
</protein>
<proteinExistence type="inferred from homology"/>
<evidence type="ECO:0000255" key="1">
    <source>
        <dbReference type="HAMAP-Rule" id="MF_00508"/>
    </source>
</evidence>
<evidence type="ECO:0000305" key="2"/>
<accession>A8G1E9</accession>
<keyword id="KW-1185">Reference proteome</keyword>
<keyword id="KW-0687">Ribonucleoprotein</keyword>
<keyword id="KW-0689">Ribosomal protein</keyword>
<organism>
    <name type="scientific">Shewanella sediminis (strain HAW-EB3)</name>
    <dbReference type="NCBI Taxonomy" id="425104"/>
    <lineage>
        <taxon>Bacteria</taxon>
        <taxon>Pseudomonadati</taxon>
        <taxon>Pseudomonadota</taxon>
        <taxon>Gammaproteobacteria</taxon>
        <taxon>Alteromonadales</taxon>
        <taxon>Shewanellaceae</taxon>
        <taxon>Shewanella</taxon>
    </lineage>
</organism>
<comment type="function">
    <text evidence="1">Involved in the binding of tRNA to the ribosomes.</text>
</comment>
<comment type="subunit">
    <text evidence="1">Part of the 30S ribosomal subunit.</text>
</comment>
<comment type="similarity">
    <text evidence="1">Belongs to the universal ribosomal protein uS10 family.</text>
</comment>
<reference key="1">
    <citation type="submission" date="2007-08" db="EMBL/GenBank/DDBJ databases">
        <title>Complete sequence of Shewanella sediminis HAW-EB3.</title>
        <authorList>
            <consortium name="US DOE Joint Genome Institute"/>
            <person name="Copeland A."/>
            <person name="Lucas S."/>
            <person name="Lapidus A."/>
            <person name="Barry K."/>
            <person name="Glavina del Rio T."/>
            <person name="Dalin E."/>
            <person name="Tice H."/>
            <person name="Pitluck S."/>
            <person name="Chertkov O."/>
            <person name="Brettin T."/>
            <person name="Bruce D."/>
            <person name="Detter J.C."/>
            <person name="Han C."/>
            <person name="Schmutz J."/>
            <person name="Larimer F."/>
            <person name="Land M."/>
            <person name="Hauser L."/>
            <person name="Kyrpides N."/>
            <person name="Kim E."/>
            <person name="Zhao J.-S."/>
            <person name="Richardson P."/>
        </authorList>
    </citation>
    <scope>NUCLEOTIDE SEQUENCE [LARGE SCALE GENOMIC DNA]</scope>
    <source>
        <strain>HAW-EB3</strain>
    </source>
</reference>
<feature type="chain" id="PRO_1000081571" description="Small ribosomal subunit protein uS10">
    <location>
        <begin position="1"/>
        <end position="103"/>
    </location>
</feature>